<organism>
    <name type="scientific">Rhodopseudomonas palustris (strain HaA2)</name>
    <dbReference type="NCBI Taxonomy" id="316058"/>
    <lineage>
        <taxon>Bacteria</taxon>
        <taxon>Pseudomonadati</taxon>
        <taxon>Pseudomonadota</taxon>
        <taxon>Alphaproteobacteria</taxon>
        <taxon>Hyphomicrobiales</taxon>
        <taxon>Nitrobacteraceae</taxon>
        <taxon>Rhodopseudomonas</taxon>
    </lineage>
</organism>
<gene>
    <name evidence="1" type="primary">glyA</name>
    <name type="ordered locus">RPB_2634</name>
</gene>
<reference key="1">
    <citation type="submission" date="2006-01" db="EMBL/GenBank/DDBJ databases">
        <title>Complete sequence of Rhodopseudomonas palustris HaA2.</title>
        <authorList>
            <consortium name="US DOE Joint Genome Institute"/>
            <person name="Copeland A."/>
            <person name="Lucas S."/>
            <person name="Lapidus A."/>
            <person name="Barry K."/>
            <person name="Detter J.C."/>
            <person name="Glavina T."/>
            <person name="Hammon N."/>
            <person name="Israni S."/>
            <person name="Pitluck S."/>
            <person name="Chain P."/>
            <person name="Malfatti S."/>
            <person name="Shin M."/>
            <person name="Vergez L."/>
            <person name="Schmutz J."/>
            <person name="Larimer F."/>
            <person name="Land M."/>
            <person name="Hauser L."/>
            <person name="Pelletier D.A."/>
            <person name="Kyrpides N."/>
            <person name="Anderson I."/>
            <person name="Oda Y."/>
            <person name="Harwood C.S."/>
            <person name="Richardson P."/>
        </authorList>
    </citation>
    <scope>NUCLEOTIDE SEQUENCE [LARGE SCALE GENOMIC DNA]</scope>
    <source>
        <strain>HaA2</strain>
    </source>
</reference>
<protein>
    <recommendedName>
        <fullName evidence="1">Serine hydroxymethyltransferase</fullName>
        <shortName evidence="1">SHMT</shortName>
        <shortName evidence="1">Serine methylase</shortName>
        <ecNumber evidence="1">2.1.2.1</ecNumber>
    </recommendedName>
</protein>
<dbReference type="EC" id="2.1.2.1" evidence="1"/>
<dbReference type="EMBL" id="CP000250">
    <property type="protein sequence ID" value="ABD07336.1"/>
    <property type="molecule type" value="Genomic_DNA"/>
</dbReference>
<dbReference type="RefSeq" id="WP_011441521.1">
    <property type="nucleotide sequence ID" value="NC_007778.1"/>
</dbReference>
<dbReference type="SMR" id="Q2IWS4"/>
<dbReference type="STRING" id="316058.RPB_2634"/>
<dbReference type="KEGG" id="rpb:RPB_2634"/>
<dbReference type="eggNOG" id="COG0112">
    <property type="taxonomic scope" value="Bacteria"/>
</dbReference>
<dbReference type="HOGENOM" id="CLU_022477_2_1_5"/>
<dbReference type="OrthoDB" id="9803846at2"/>
<dbReference type="UniPathway" id="UPA00193"/>
<dbReference type="UniPathway" id="UPA00288">
    <property type="reaction ID" value="UER01023"/>
</dbReference>
<dbReference type="Proteomes" id="UP000008809">
    <property type="component" value="Chromosome"/>
</dbReference>
<dbReference type="GO" id="GO:0005829">
    <property type="term" value="C:cytosol"/>
    <property type="evidence" value="ECO:0007669"/>
    <property type="project" value="TreeGrafter"/>
</dbReference>
<dbReference type="GO" id="GO:0004372">
    <property type="term" value="F:glycine hydroxymethyltransferase activity"/>
    <property type="evidence" value="ECO:0007669"/>
    <property type="project" value="UniProtKB-UniRule"/>
</dbReference>
<dbReference type="GO" id="GO:0030170">
    <property type="term" value="F:pyridoxal phosphate binding"/>
    <property type="evidence" value="ECO:0007669"/>
    <property type="project" value="UniProtKB-UniRule"/>
</dbReference>
<dbReference type="GO" id="GO:0019264">
    <property type="term" value="P:glycine biosynthetic process from serine"/>
    <property type="evidence" value="ECO:0007669"/>
    <property type="project" value="UniProtKB-UniRule"/>
</dbReference>
<dbReference type="GO" id="GO:0035999">
    <property type="term" value="P:tetrahydrofolate interconversion"/>
    <property type="evidence" value="ECO:0007669"/>
    <property type="project" value="UniProtKB-UniRule"/>
</dbReference>
<dbReference type="CDD" id="cd00378">
    <property type="entry name" value="SHMT"/>
    <property type="match status" value="1"/>
</dbReference>
<dbReference type="FunFam" id="3.40.640.10:FF:000001">
    <property type="entry name" value="Serine hydroxymethyltransferase"/>
    <property type="match status" value="1"/>
</dbReference>
<dbReference type="FunFam" id="3.90.1150.10:FF:000003">
    <property type="entry name" value="Serine hydroxymethyltransferase"/>
    <property type="match status" value="1"/>
</dbReference>
<dbReference type="Gene3D" id="3.90.1150.10">
    <property type="entry name" value="Aspartate Aminotransferase, domain 1"/>
    <property type="match status" value="1"/>
</dbReference>
<dbReference type="Gene3D" id="3.40.640.10">
    <property type="entry name" value="Type I PLP-dependent aspartate aminotransferase-like (Major domain)"/>
    <property type="match status" value="1"/>
</dbReference>
<dbReference type="HAMAP" id="MF_00051">
    <property type="entry name" value="SHMT"/>
    <property type="match status" value="1"/>
</dbReference>
<dbReference type="InterPro" id="IPR015424">
    <property type="entry name" value="PyrdxlP-dep_Trfase"/>
</dbReference>
<dbReference type="InterPro" id="IPR015421">
    <property type="entry name" value="PyrdxlP-dep_Trfase_major"/>
</dbReference>
<dbReference type="InterPro" id="IPR015422">
    <property type="entry name" value="PyrdxlP-dep_Trfase_small"/>
</dbReference>
<dbReference type="InterPro" id="IPR001085">
    <property type="entry name" value="Ser_HO-MeTrfase"/>
</dbReference>
<dbReference type="InterPro" id="IPR049943">
    <property type="entry name" value="Ser_HO-MeTrfase-like"/>
</dbReference>
<dbReference type="InterPro" id="IPR019798">
    <property type="entry name" value="Ser_HO-MeTrfase_PLP_BS"/>
</dbReference>
<dbReference type="InterPro" id="IPR039429">
    <property type="entry name" value="SHMT-like_dom"/>
</dbReference>
<dbReference type="NCBIfam" id="NF000586">
    <property type="entry name" value="PRK00011.1"/>
    <property type="match status" value="1"/>
</dbReference>
<dbReference type="PANTHER" id="PTHR11680">
    <property type="entry name" value="SERINE HYDROXYMETHYLTRANSFERASE"/>
    <property type="match status" value="1"/>
</dbReference>
<dbReference type="PANTHER" id="PTHR11680:SF35">
    <property type="entry name" value="SERINE HYDROXYMETHYLTRANSFERASE 1"/>
    <property type="match status" value="1"/>
</dbReference>
<dbReference type="Pfam" id="PF00464">
    <property type="entry name" value="SHMT"/>
    <property type="match status" value="1"/>
</dbReference>
<dbReference type="PIRSF" id="PIRSF000412">
    <property type="entry name" value="SHMT"/>
    <property type="match status" value="1"/>
</dbReference>
<dbReference type="SUPFAM" id="SSF53383">
    <property type="entry name" value="PLP-dependent transferases"/>
    <property type="match status" value="1"/>
</dbReference>
<dbReference type="PROSITE" id="PS00096">
    <property type="entry name" value="SHMT"/>
    <property type="match status" value="1"/>
</dbReference>
<proteinExistence type="inferred from homology"/>
<keyword id="KW-0028">Amino-acid biosynthesis</keyword>
<keyword id="KW-0963">Cytoplasm</keyword>
<keyword id="KW-0554">One-carbon metabolism</keyword>
<keyword id="KW-0663">Pyridoxal phosphate</keyword>
<keyword id="KW-1185">Reference proteome</keyword>
<keyword id="KW-0808">Transferase</keyword>
<name>GLYA_RHOP2</name>
<sequence>MSTSAKHTSAPDSFFSASLEQADPEIAAAIKGELGRQRHEVELIASENIVSRAVLEAQGSVMTNKYAEGYPGARYYGGCEFVDVAENLAIERAKKLFGAGFANVQPNSGSQMNQAVFLALLQPGDTFMGLDLAAGGHLTHGATVNMSGKWFKPVHYTVRREDGIIDMDAVAKLAEETRPKLIIAGGSAYSRAWDFKRFREIADSVGAYFMVDMAHFAGLVAGGAHASPVPHAHVCTTTTHKSLRGPRGGLILTNDEALAKKFNSAIFPGLQGGPLMHVIAAKAVAFKEALQPDFKVYAKNVVENAKALAETLRAAGFDLVSGGTDNHLMLVDLRPKGLKGNVSEKALVRAAITCNKNGIPFDPEKPFVTSGLRLGTPAATTRGFGVAEFQQVGNLIAEVLNAIAQSPDGAAPLVEASVKQRVKELTDRFPIYQ</sequence>
<evidence type="ECO:0000255" key="1">
    <source>
        <dbReference type="HAMAP-Rule" id="MF_00051"/>
    </source>
</evidence>
<feature type="chain" id="PRO_0000369951" description="Serine hydroxymethyltransferase">
    <location>
        <begin position="1"/>
        <end position="433"/>
    </location>
</feature>
<feature type="binding site" evidence="1">
    <location>
        <position position="132"/>
    </location>
    <ligand>
        <name>(6S)-5,6,7,8-tetrahydrofolate</name>
        <dbReference type="ChEBI" id="CHEBI:57453"/>
    </ligand>
</feature>
<feature type="binding site" evidence="1">
    <location>
        <begin position="136"/>
        <end position="138"/>
    </location>
    <ligand>
        <name>(6S)-5,6,7,8-tetrahydrofolate</name>
        <dbReference type="ChEBI" id="CHEBI:57453"/>
    </ligand>
</feature>
<feature type="site" description="Plays an important role in substrate specificity" evidence="1">
    <location>
        <position position="240"/>
    </location>
</feature>
<feature type="modified residue" description="N6-(pyridoxal phosphate)lysine" evidence="1">
    <location>
        <position position="241"/>
    </location>
</feature>
<accession>Q2IWS4</accession>
<comment type="function">
    <text evidence="1">Catalyzes the reversible interconversion of serine and glycine with tetrahydrofolate (THF) serving as the one-carbon carrier. This reaction serves as the major source of one-carbon groups required for the biosynthesis of purines, thymidylate, methionine, and other important biomolecules. Also exhibits THF-independent aldolase activity toward beta-hydroxyamino acids, producing glycine and aldehydes, via a retro-aldol mechanism.</text>
</comment>
<comment type="catalytic activity">
    <reaction evidence="1">
        <text>(6R)-5,10-methylene-5,6,7,8-tetrahydrofolate + glycine + H2O = (6S)-5,6,7,8-tetrahydrofolate + L-serine</text>
        <dbReference type="Rhea" id="RHEA:15481"/>
        <dbReference type="ChEBI" id="CHEBI:15377"/>
        <dbReference type="ChEBI" id="CHEBI:15636"/>
        <dbReference type="ChEBI" id="CHEBI:33384"/>
        <dbReference type="ChEBI" id="CHEBI:57305"/>
        <dbReference type="ChEBI" id="CHEBI:57453"/>
        <dbReference type="EC" id="2.1.2.1"/>
    </reaction>
</comment>
<comment type="cofactor">
    <cofactor evidence="1">
        <name>pyridoxal 5'-phosphate</name>
        <dbReference type="ChEBI" id="CHEBI:597326"/>
    </cofactor>
</comment>
<comment type="pathway">
    <text evidence="1">One-carbon metabolism; tetrahydrofolate interconversion.</text>
</comment>
<comment type="pathway">
    <text evidence="1">Amino-acid biosynthesis; glycine biosynthesis; glycine from L-serine: step 1/1.</text>
</comment>
<comment type="subunit">
    <text evidence="1">Homodimer.</text>
</comment>
<comment type="subcellular location">
    <subcellularLocation>
        <location evidence="1">Cytoplasm</location>
    </subcellularLocation>
</comment>
<comment type="similarity">
    <text evidence="1">Belongs to the SHMT family.</text>
</comment>